<gene>
    <name evidence="1" type="primary">dabA</name>
    <name type="ordered locus">BCE33L2873</name>
</gene>
<accession>Q639F7</accession>
<protein>
    <recommendedName>
        <fullName evidence="1">Probable inorganic carbon transporter subunit DabA</fullName>
    </recommendedName>
</protein>
<keyword id="KW-1003">Cell membrane</keyword>
<keyword id="KW-0472">Membrane</keyword>
<keyword id="KW-0479">Metal-binding</keyword>
<keyword id="KW-0813">Transport</keyword>
<keyword id="KW-0862">Zinc</keyword>
<sequence>MSIQSIVTKETLKKKDTNIEIQEKNMNDLVVSASRVIAPLWPISTFAAHHPWMGLEKQSFEQVANWLKEARNVDIYPSASMIHSAKAKGEIEESFLQIALSRWLDSQSFHMPRETAERFCQEALKLERLPSSLLSSPELNKLAEEISYVNTGSMKDSSMQPISSLIENQKGDNLSDILNYHIIKWCKLYLDDTGASWTMPNREKGFYRAWQHLITFDPALSKNERKVLKDWPEDPLIALTKALSELGISESNMQAYLEGHLLSLPGWAGMIRWRSQQSIEEQELLVEYLAVRLSMELAIVKPYLPLKNQKAEKKVSIVPLIASWIYWGDISVEKWSQMSATEQSELLAFAYRFDENTRKKLWLKAWEQTHAEQLREKIASKQRATNDKKRVVAQLAFCIDVRSEPFRRHLEKLGPFETFGIAGFFGLPIATTELGSNNSHPSLPVILKPKHQIKELTDENEYNSYEQRKKIDSSVSYTFKTMKQNVLTSMLLPEVSGPLLGLQMVTRSFVPRSVGGFIRNLRKTMLQKPNTTFSLNHVHDTNCEIPIGFTKEEKVNYVRQALKMVGLTEGFAPLVVMCGHSSQSTNNPYAAALECGACGGAAGGFNARVFATLCNLPEVREALSAEGINIPEDTIFAAAEHKTTVDELEWIYVPKLSETAQEAFDCIDSIMPNVSQHANRERLMQLPNFKTKIKNPSKEAHRFAEDWSEIRPEWGLARNASFIIGQRELTRDCDLEGRAFLHNYDWKQDESGDILASIIAGPGTVAQWINLQYYASTVAPHYYGSGNKTTQTVTAGLGVMQGNASDLLSGLPWQSVMQSDSETYHSPLRLLIVIQAPTKYIERLLNNDFTFREKVQNGWVRLASVDPEGRWKNW</sequence>
<evidence type="ECO:0000255" key="1">
    <source>
        <dbReference type="HAMAP-Rule" id="MF_01871"/>
    </source>
</evidence>
<organism>
    <name type="scientific">Bacillus cereus (strain ZK / E33L)</name>
    <dbReference type="NCBI Taxonomy" id="288681"/>
    <lineage>
        <taxon>Bacteria</taxon>
        <taxon>Bacillati</taxon>
        <taxon>Bacillota</taxon>
        <taxon>Bacilli</taxon>
        <taxon>Bacillales</taxon>
        <taxon>Bacillaceae</taxon>
        <taxon>Bacillus</taxon>
        <taxon>Bacillus cereus group</taxon>
    </lineage>
</organism>
<dbReference type="EMBL" id="CP000001">
    <property type="protein sequence ID" value="AAU17388.1"/>
    <property type="molecule type" value="Genomic_DNA"/>
</dbReference>
<dbReference type="RefSeq" id="WP_000027423.1">
    <property type="nucleotide sequence ID" value="NC_006274.1"/>
</dbReference>
<dbReference type="SMR" id="Q639F7"/>
<dbReference type="KEGG" id="bcz:BCE33L2873"/>
<dbReference type="PATRIC" id="fig|288681.22.peg.2579"/>
<dbReference type="Proteomes" id="UP000002612">
    <property type="component" value="Chromosome"/>
</dbReference>
<dbReference type="GO" id="GO:0005886">
    <property type="term" value="C:plasma membrane"/>
    <property type="evidence" value="ECO:0007669"/>
    <property type="project" value="UniProtKB-SubCell"/>
</dbReference>
<dbReference type="GO" id="GO:0008270">
    <property type="term" value="F:zinc ion binding"/>
    <property type="evidence" value="ECO:0007669"/>
    <property type="project" value="UniProtKB-UniRule"/>
</dbReference>
<dbReference type="HAMAP" id="MF_01871">
    <property type="entry name" value="DabA"/>
    <property type="match status" value="1"/>
</dbReference>
<dbReference type="InterPro" id="IPR018752">
    <property type="entry name" value="DabA"/>
</dbReference>
<dbReference type="PANTHER" id="PTHR38344:SF1">
    <property type="entry name" value="INORGANIC CARBON TRANSPORTER SUBUNIT DABA-RELATED"/>
    <property type="match status" value="1"/>
</dbReference>
<dbReference type="PANTHER" id="PTHR38344">
    <property type="entry name" value="UPF0753 PROTEIN AQ_863"/>
    <property type="match status" value="1"/>
</dbReference>
<dbReference type="Pfam" id="PF10070">
    <property type="entry name" value="DabA"/>
    <property type="match status" value="1"/>
</dbReference>
<reference key="1">
    <citation type="journal article" date="2006" name="J. Bacteriol.">
        <title>Pathogenomic sequence analysis of Bacillus cereus and Bacillus thuringiensis isolates closely related to Bacillus anthracis.</title>
        <authorList>
            <person name="Han C.S."/>
            <person name="Xie G."/>
            <person name="Challacombe J.F."/>
            <person name="Altherr M.R."/>
            <person name="Bhotika S.S."/>
            <person name="Bruce D."/>
            <person name="Campbell C.S."/>
            <person name="Campbell M.L."/>
            <person name="Chen J."/>
            <person name="Chertkov O."/>
            <person name="Cleland C."/>
            <person name="Dimitrijevic M."/>
            <person name="Doggett N.A."/>
            <person name="Fawcett J.J."/>
            <person name="Glavina T."/>
            <person name="Goodwin L.A."/>
            <person name="Hill K.K."/>
            <person name="Hitchcock P."/>
            <person name="Jackson P.J."/>
            <person name="Keim P."/>
            <person name="Kewalramani A.R."/>
            <person name="Longmire J."/>
            <person name="Lucas S."/>
            <person name="Malfatti S."/>
            <person name="McMurry K."/>
            <person name="Meincke L.J."/>
            <person name="Misra M."/>
            <person name="Moseman B.L."/>
            <person name="Mundt M."/>
            <person name="Munk A.C."/>
            <person name="Okinaka R.T."/>
            <person name="Parson-Quintana B."/>
            <person name="Reilly L.P."/>
            <person name="Richardson P."/>
            <person name="Robinson D.L."/>
            <person name="Rubin E."/>
            <person name="Saunders E."/>
            <person name="Tapia R."/>
            <person name="Tesmer J.G."/>
            <person name="Thayer N."/>
            <person name="Thompson L.S."/>
            <person name="Tice H."/>
            <person name="Ticknor L.O."/>
            <person name="Wills P.L."/>
            <person name="Brettin T.S."/>
            <person name="Gilna P."/>
        </authorList>
    </citation>
    <scope>NUCLEOTIDE SEQUENCE [LARGE SCALE GENOMIC DNA]</scope>
    <source>
        <strain>ZK / E33L</strain>
    </source>
</reference>
<name>DABA_BACCZ</name>
<proteinExistence type="inferred from homology"/>
<feature type="chain" id="PRO_0000387245" description="Probable inorganic carbon transporter subunit DabA">
    <location>
        <begin position="1"/>
        <end position="874"/>
    </location>
</feature>
<feature type="binding site" evidence="1">
    <location>
        <position position="398"/>
    </location>
    <ligand>
        <name>Zn(2+)</name>
        <dbReference type="ChEBI" id="CHEBI:29105"/>
    </ligand>
</feature>
<feature type="binding site" evidence="1">
    <location>
        <position position="400"/>
    </location>
    <ligand>
        <name>Zn(2+)</name>
        <dbReference type="ChEBI" id="CHEBI:29105"/>
    </ligand>
</feature>
<feature type="binding site" evidence="1">
    <location>
        <position position="580"/>
    </location>
    <ligand>
        <name>Zn(2+)</name>
        <dbReference type="ChEBI" id="CHEBI:29105"/>
    </ligand>
</feature>
<feature type="binding site" evidence="1">
    <location>
        <position position="595"/>
    </location>
    <ligand>
        <name>Zn(2+)</name>
        <dbReference type="ChEBI" id="CHEBI:29105"/>
    </ligand>
</feature>
<comment type="function">
    <text evidence="1">Part of an energy-coupled inorganic carbon pump.</text>
</comment>
<comment type="cofactor">
    <cofactor evidence="1">
        <name>Zn(2+)</name>
        <dbReference type="ChEBI" id="CHEBI:29105"/>
    </cofactor>
</comment>
<comment type="subunit">
    <text evidence="1">Forms a complex with DabB.</text>
</comment>
<comment type="subcellular location">
    <subcellularLocation>
        <location evidence="1">Cell membrane</location>
        <topology evidence="1">Peripheral membrane protein</topology>
    </subcellularLocation>
</comment>
<comment type="similarity">
    <text evidence="1">Belongs to the inorganic carbon transporter (TC 9.A.2) DabA family.</text>
</comment>